<accession>O82169</accession>
<name>MORF6_ARATH</name>
<protein>
    <recommendedName>
        <fullName evidence="8">Multiple organellar RNA editing factor 6, mitochondrial</fullName>
    </recommendedName>
    <alternativeName>
        <fullName evidence="7">RNA editing-interacting protein 6</fullName>
    </alternativeName>
</protein>
<proteinExistence type="evidence at protein level"/>
<keyword id="KW-0496">Mitochondrion</keyword>
<keyword id="KW-0507">mRNA processing</keyword>
<keyword id="KW-1185">Reference proteome</keyword>
<keyword id="KW-0809">Transit peptide</keyword>
<organism>
    <name type="scientific">Arabidopsis thaliana</name>
    <name type="common">Mouse-ear cress</name>
    <dbReference type="NCBI Taxonomy" id="3702"/>
    <lineage>
        <taxon>Eukaryota</taxon>
        <taxon>Viridiplantae</taxon>
        <taxon>Streptophyta</taxon>
        <taxon>Embryophyta</taxon>
        <taxon>Tracheophyta</taxon>
        <taxon>Spermatophyta</taxon>
        <taxon>Magnoliopsida</taxon>
        <taxon>eudicotyledons</taxon>
        <taxon>Gunneridae</taxon>
        <taxon>Pentapetalae</taxon>
        <taxon>rosids</taxon>
        <taxon>malvids</taxon>
        <taxon>Brassicales</taxon>
        <taxon>Brassicaceae</taxon>
        <taxon>Camelineae</taxon>
        <taxon>Arabidopsis</taxon>
    </lineage>
</organism>
<evidence type="ECO:0000255" key="1"/>
<evidence type="ECO:0000256" key="2">
    <source>
        <dbReference type="SAM" id="MobiDB-lite"/>
    </source>
</evidence>
<evidence type="ECO:0000269" key="3">
    <source>
    </source>
</evidence>
<evidence type="ECO:0000269" key="4">
    <source>
    </source>
</evidence>
<evidence type="ECO:0000269" key="5">
    <source>
    </source>
</evidence>
<evidence type="ECO:0000303" key="6">
    <source>
    </source>
</evidence>
<evidence type="ECO:0000303" key="7">
    <source>
    </source>
</evidence>
<evidence type="ECO:0000305" key="8"/>
<evidence type="ECO:0000312" key="9">
    <source>
        <dbReference type="Araport" id="AT2G35240"/>
    </source>
</evidence>
<feature type="transit peptide" description="Mitochondrion" evidence="1">
    <location>
        <begin position="1"/>
        <end position="67"/>
    </location>
</feature>
<feature type="chain" id="PRO_0000432529" description="Multiple organellar RNA editing factor 6, mitochondrial">
    <location>
        <begin position="68"/>
        <end position="232"/>
    </location>
</feature>
<feature type="region of interest" description="Disordered" evidence="2">
    <location>
        <begin position="208"/>
        <end position="232"/>
    </location>
</feature>
<feature type="compositionally biased region" description="Basic and acidic residues" evidence="2">
    <location>
        <begin position="212"/>
        <end position="232"/>
    </location>
</feature>
<sequence>MAKTLSRSTASCVAKRFFSTSNAVASPSPLPSHLISRRFSPTIFHAVGYIPALTRFTTIRTRMDRSGGSYSPLKSGSNFSDRPPTEMAPLFPGCDYEHWLIVMEKPGGENAQKQQMIDCYVQTLAKIVGSEEEARKKIYNVSCERYFGFGCEIDEETSNKLEGLPGVLFVLPDSYVDPEFKDYGAELFVNGEVVPRPPERQRRMVELTNQRGSDKPKYHDRIRNVRRRENMR</sequence>
<dbReference type="EMBL" id="AC004667">
    <property type="protein sequence ID" value="AAC61814.1"/>
    <property type="molecule type" value="Genomic_DNA"/>
</dbReference>
<dbReference type="EMBL" id="CP002685">
    <property type="protein sequence ID" value="AEC09085.1"/>
    <property type="molecule type" value="Genomic_DNA"/>
</dbReference>
<dbReference type="EMBL" id="AY072439">
    <property type="protein sequence ID" value="AAL62431.1"/>
    <property type="molecule type" value="mRNA"/>
</dbReference>
<dbReference type="EMBL" id="BT003414">
    <property type="protein sequence ID" value="AAO30077.1"/>
    <property type="molecule type" value="mRNA"/>
</dbReference>
<dbReference type="PIR" id="B84766">
    <property type="entry name" value="B84766"/>
</dbReference>
<dbReference type="RefSeq" id="NP_181067.1">
    <property type="nucleotide sequence ID" value="NM_129076.4"/>
</dbReference>
<dbReference type="SMR" id="O82169"/>
<dbReference type="FunCoup" id="O82169">
    <property type="interactions" value="88"/>
</dbReference>
<dbReference type="IntAct" id="O82169">
    <property type="interactions" value="4"/>
</dbReference>
<dbReference type="STRING" id="3702.O82169"/>
<dbReference type="PaxDb" id="3702-AT2G35240.1"/>
<dbReference type="ProteomicsDB" id="238305"/>
<dbReference type="EnsemblPlants" id="AT2G35240.1">
    <property type="protein sequence ID" value="AT2G35240.1"/>
    <property type="gene ID" value="AT2G35240"/>
</dbReference>
<dbReference type="GeneID" id="818091"/>
<dbReference type="Gramene" id="AT2G35240.1">
    <property type="protein sequence ID" value="AT2G35240.1"/>
    <property type="gene ID" value="AT2G35240"/>
</dbReference>
<dbReference type="KEGG" id="ath:AT2G35240"/>
<dbReference type="Araport" id="AT2G35240"/>
<dbReference type="TAIR" id="AT2G35240">
    <property type="gene designation" value="MORF6"/>
</dbReference>
<dbReference type="eggNOG" id="ENOG502QPXC">
    <property type="taxonomic scope" value="Eukaryota"/>
</dbReference>
<dbReference type="HOGENOM" id="CLU_073703_1_0_1"/>
<dbReference type="InParanoid" id="O82169"/>
<dbReference type="OMA" id="YHDRIRN"/>
<dbReference type="OrthoDB" id="1876874at2759"/>
<dbReference type="PhylomeDB" id="O82169"/>
<dbReference type="PRO" id="PR:O82169"/>
<dbReference type="Proteomes" id="UP000006548">
    <property type="component" value="Chromosome 2"/>
</dbReference>
<dbReference type="ExpressionAtlas" id="O82169">
    <property type="expression patterns" value="baseline and differential"/>
</dbReference>
<dbReference type="GO" id="GO:0005783">
    <property type="term" value="C:endoplasmic reticulum"/>
    <property type="evidence" value="ECO:0007005"/>
    <property type="project" value="TAIR"/>
</dbReference>
<dbReference type="GO" id="GO:0005739">
    <property type="term" value="C:mitochondrion"/>
    <property type="evidence" value="ECO:0000314"/>
    <property type="project" value="TAIR"/>
</dbReference>
<dbReference type="GO" id="GO:0003729">
    <property type="term" value="F:mRNA binding"/>
    <property type="evidence" value="ECO:0000314"/>
    <property type="project" value="TAIR"/>
</dbReference>
<dbReference type="GO" id="GO:0046983">
    <property type="term" value="F:protein dimerization activity"/>
    <property type="evidence" value="ECO:0000353"/>
    <property type="project" value="TAIR"/>
</dbReference>
<dbReference type="GO" id="GO:0042803">
    <property type="term" value="F:protein homodimerization activity"/>
    <property type="evidence" value="ECO:0000353"/>
    <property type="project" value="TAIR"/>
</dbReference>
<dbReference type="GO" id="GO:0016554">
    <property type="term" value="P:cytidine to uridine editing"/>
    <property type="evidence" value="ECO:0007669"/>
    <property type="project" value="InterPro"/>
</dbReference>
<dbReference type="GO" id="GO:0080156">
    <property type="term" value="P:mitochondrial mRNA modification"/>
    <property type="evidence" value="ECO:0000315"/>
    <property type="project" value="UniProtKB"/>
</dbReference>
<dbReference type="GO" id="GO:0006397">
    <property type="term" value="P:mRNA processing"/>
    <property type="evidence" value="ECO:0007669"/>
    <property type="project" value="UniProtKB-KW"/>
</dbReference>
<dbReference type="FunFam" id="3.30.70.80:FF:000001">
    <property type="entry name" value="Multiple organellar RNA editing factor"/>
    <property type="match status" value="1"/>
</dbReference>
<dbReference type="Gene3D" id="3.30.70.80">
    <property type="entry name" value="Peptidase S8 propeptide/proteinase inhibitor I9"/>
    <property type="match status" value="1"/>
</dbReference>
<dbReference type="InterPro" id="IPR039206">
    <property type="entry name" value="MORF/ORRM1/DAG-like"/>
</dbReference>
<dbReference type="InterPro" id="IPR054059">
    <property type="entry name" value="MORF/ORRM1/DAG-like_MORF"/>
</dbReference>
<dbReference type="InterPro" id="IPR037045">
    <property type="entry name" value="S8pro/Inhibitor_I9_sf"/>
</dbReference>
<dbReference type="PANTHER" id="PTHR31346:SF7">
    <property type="entry name" value="MULTIPLE ORGANELLAR RNA EDITING FACTOR 2, CHLOROPLASTIC-RELATED"/>
    <property type="match status" value="1"/>
</dbReference>
<dbReference type="PANTHER" id="PTHR31346">
    <property type="entry name" value="MULTIPLE ORGANELLAR RNA EDITING FACTOR 2, CHLOROPLASTIC-RELATED-RELATED"/>
    <property type="match status" value="1"/>
</dbReference>
<dbReference type="Pfam" id="PF21864">
    <property type="entry name" value="MORF_dom"/>
    <property type="match status" value="1"/>
</dbReference>
<reference key="1">
    <citation type="journal article" date="1999" name="Nature">
        <title>Sequence and analysis of chromosome 2 of the plant Arabidopsis thaliana.</title>
        <authorList>
            <person name="Lin X."/>
            <person name="Kaul S."/>
            <person name="Rounsley S.D."/>
            <person name="Shea T.P."/>
            <person name="Benito M.-I."/>
            <person name="Town C.D."/>
            <person name="Fujii C.Y."/>
            <person name="Mason T.M."/>
            <person name="Bowman C.L."/>
            <person name="Barnstead M.E."/>
            <person name="Feldblyum T.V."/>
            <person name="Buell C.R."/>
            <person name="Ketchum K.A."/>
            <person name="Lee J.J."/>
            <person name="Ronning C.M."/>
            <person name="Koo H.L."/>
            <person name="Moffat K.S."/>
            <person name="Cronin L.A."/>
            <person name="Shen M."/>
            <person name="Pai G."/>
            <person name="Van Aken S."/>
            <person name="Umayam L."/>
            <person name="Tallon L.J."/>
            <person name="Gill J.E."/>
            <person name="Adams M.D."/>
            <person name="Carrera A.J."/>
            <person name="Creasy T.H."/>
            <person name="Goodman H.M."/>
            <person name="Somerville C.R."/>
            <person name="Copenhaver G.P."/>
            <person name="Preuss D."/>
            <person name="Nierman W.C."/>
            <person name="White O."/>
            <person name="Eisen J.A."/>
            <person name="Salzberg S.L."/>
            <person name="Fraser C.M."/>
            <person name="Venter J.C."/>
        </authorList>
    </citation>
    <scope>NUCLEOTIDE SEQUENCE [LARGE SCALE GENOMIC DNA]</scope>
    <source>
        <strain>cv. Columbia</strain>
    </source>
</reference>
<reference key="2">
    <citation type="journal article" date="2017" name="Plant J.">
        <title>Araport11: a complete reannotation of the Arabidopsis thaliana reference genome.</title>
        <authorList>
            <person name="Cheng C.Y."/>
            <person name="Krishnakumar V."/>
            <person name="Chan A.P."/>
            <person name="Thibaud-Nissen F."/>
            <person name="Schobel S."/>
            <person name="Town C.D."/>
        </authorList>
    </citation>
    <scope>GENOME REANNOTATION</scope>
    <source>
        <strain>cv. Columbia</strain>
    </source>
</reference>
<reference key="3">
    <citation type="journal article" date="2003" name="Science">
        <title>Empirical analysis of transcriptional activity in the Arabidopsis genome.</title>
        <authorList>
            <person name="Yamada K."/>
            <person name="Lim J."/>
            <person name="Dale J.M."/>
            <person name="Chen H."/>
            <person name="Shinn P."/>
            <person name="Palm C.J."/>
            <person name="Southwick A.M."/>
            <person name="Wu H.C."/>
            <person name="Kim C.J."/>
            <person name="Nguyen M."/>
            <person name="Pham P.K."/>
            <person name="Cheuk R.F."/>
            <person name="Karlin-Newmann G."/>
            <person name="Liu S.X."/>
            <person name="Lam B."/>
            <person name="Sakano H."/>
            <person name="Wu T."/>
            <person name="Yu G."/>
            <person name="Miranda M."/>
            <person name="Quach H.L."/>
            <person name="Tripp M."/>
            <person name="Chang C.H."/>
            <person name="Lee J.M."/>
            <person name="Toriumi M.J."/>
            <person name="Chan M.M."/>
            <person name="Tang C.C."/>
            <person name="Onodera C.S."/>
            <person name="Deng J.M."/>
            <person name="Akiyama K."/>
            <person name="Ansari Y."/>
            <person name="Arakawa T."/>
            <person name="Banh J."/>
            <person name="Banno F."/>
            <person name="Bowser L."/>
            <person name="Brooks S.Y."/>
            <person name="Carninci P."/>
            <person name="Chao Q."/>
            <person name="Choy N."/>
            <person name="Enju A."/>
            <person name="Goldsmith A.D."/>
            <person name="Gurjal M."/>
            <person name="Hansen N.F."/>
            <person name="Hayashizaki Y."/>
            <person name="Johnson-Hopson C."/>
            <person name="Hsuan V.W."/>
            <person name="Iida K."/>
            <person name="Karnes M."/>
            <person name="Khan S."/>
            <person name="Koesema E."/>
            <person name="Ishida J."/>
            <person name="Jiang P.X."/>
            <person name="Jones T."/>
            <person name="Kawai J."/>
            <person name="Kamiya A."/>
            <person name="Meyers C."/>
            <person name="Nakajima M."/>
            <person name="Narusaka M."/>
            <person name="Seki M."/>
            <person name="Sakurai T."/>
            <person name="Satou M."/>
            <person name="Tamse R."/>
            <person name="Vaysberg M."/>
            <person name="Wallender E.K."/>
            <person name="Wong C."/>
            <person name="Yamamura Y."/>
            <person name="Yuan S."/>
            <person name="Shinozaki K."/>
            <person name="Davis R.W."/>
            <person name="Theologis A."/>
            <person name="Ecker J.R."/>
        </authorList>
    </citation>
    <scope>NUCLEOTIDE SEQUENCE [LARGE SCALE MRNA]</scope>
    <source>
        <strain>cv. Columbia</strain>
    </source>
</reference>
<reference key="4">
    <citation type="journal article" date="2012" name="Proc. Natl. Acad. Sci. U.S.A.">
        <title>Multiple organellar RNA editing factor (MORF) family proteins are required for RNA editing in mitochondria and plastids of plants.</title>
        <authorList>
            <person name="Takenaka M."/>
            <person name="Zehrmann A."/>
            <person name="Verbitskiy D."/>
            <person name="Kugelmann M."/>
            <person name="Hartel B."/>
            <person name="Brennicke A."/>
        </authorList>
    </citation>
    <scope>FUNCTION</scope>
    <scope>GENE FAMILY</scope>
    <scope>NOMENCLATURE</scope>
</reference>
<reference key="5">
    <citation type="journal article" date="2013" name="PLoS Genet.">
        <title>Comprehensive high-resolution analysis of the role of an Arabidopsis gene family in RNA editing.</title>
        <authorList>
            <person name="Bentolila S."/>
            <person name="Oh J."/>
            <person name="Hanson M.R."/>
            <person name="Bukowski R."/>
        </authorList>
    </citation>
    <scope>GENE FAMILY</scope>
</reference>
<reference key="6">
    <citation type="journal article" date="2015" name="J. Biol. Chem.">
        <title>Selective homo- and heteromer interactions between the multiple organellar RNA editing factor (MORF) proteins in Arabidopsis thaliana.</title>
        <authorList>
            <person name="Zehrmann A."/>
            <person name="Haertel B."/>
            <person name="Glass F."/>
            <person name="Bayer-Csaszar E."/>
            <person name="Obata T."/>
            <person name="Meyer E."/>
            <person name="Brennicke A."/>
            <person name="Takenaka M."/>
        </authorList>
    </citation>
    <scope>INTERACTION WITH MORF8/RIP1; MORF1/RIP8; MORF5/RIP5 AND MORF7/RIP7</scope>
    <scope>SUBCELLULAR LOCATION</scope>
</reference>
<gene>
    <name evidence="6" type="primary">MORF6</name>
    <name evidence="7" type="synonym">RIP6</name>
    <name evidence="9" type="ordered locus">At2g35240</name>
</gene>
<comment type="function">
    <text evidence="3 4">Involved in organellar RNA editing. Required for the processing of few RNA editing sites in mitochondria.</text>
</comment>
<comment type="subunit">
    <text evidence="5">Heterodimers with MORF8/RIP1, MORF3/RIP3, MORF6/RIP6, MORF7/RIP7 and MORF9/RIP9.</text>
</comment>
<comment type="subcellular location">
    <subcellularLocation>
        <location evidence="5">Mitochondrion</location>
    </subcellularLocation>
</comment>
<comment type="similarity">
    <text>Belongs to the MORF family.</text>
</comment>